<proteinExistence type="evidence at protein level"/>
<dbReference type="EC" id="3.4.23.23" evidence="1"/>
<dbReference type="GO" id="GO:0004190">
    <property type="term" value="F:aspartic-type endopeptidase activity"/>
    <property type="evidence" value="ECO:0000314"/>
    <property type="project" value="UniProtKB"/>
</dbReference>
<dbReference type="GO" id="GO:0006508">
    <property type="term" value="P:proteolysis"/>
    <property type="evidence" value="ECO:0000314"/>
    <property type="project" value="UniProtKB"/>
</dbReference>
<keyword id="KW-0064">Aspartyl protease</keyword>
<keyword id="KW-0903">Direct protein sequencing</keyword>
<keyword id="KW-0378">Hydrolase</keyword>
<keyword id="KW-0645">Protease</keyword>
<protein>
    <recommendedName>
        <fullName evidence="3">Mucorpepsin</fullName>
        <ecNumber evidence="1">3.4.23.23</ecNumber>
    </recommendedName>
</protein>
<organism evidence="2">
    <name type="scientific">Mucor thermohyalospora</name>
    <name type="common">Soil fungus</name>
    <dbReference type="NCBI Taxonomy" id="2653441"/>
    <lineage>
        <taxon>Eukaryota</taxon>
        <taxon>Fungi</taxon>
        <taxon>Fungi incertae sedis</taxon>
        <taxon>Mucoromycota</taxon>
        <taxon>Mucoromycotina</taxon>
        <taxon>Mucoromycetes</taxon>
        <taxon>Mucorales</taxon>
        <taxon>Mucorineae</taxon>
        <taxon>Mucoraceae</taxon>
        <taxon>Mucor</taxon>
    </lineage>
</organism>
<evidence type="ECO:0000269" key="1">
    <source>
    </source>
</evidence>
<evidence type="ECO:0000303" key="2">
    <source>
    </source>
</evidence>
<evidence type="ECO:0000305" key="3"/>
<accession>C0HLM5</accession>
<comment type="catalytic activity">
    <reaction evidence="1">
        <text>Hydrolysis of proteins, favoring hydrophobic residues at P1 and P1'. Clots milk. Does not accept Lys at P1, and hence does not activate trypsinogen.</text>
        <dbReference type="EC" id="3.4.23.23"/>
    </reaction>
</comment>
<comment type="biophysicochemical properties">
    <phDependence>
        <text evidence="1">Optimum pH is 6 with hemoglobin as substrate. Activity decreases from pH 7, with a 36% decrease in activity when incubated at pH 10.</text>
    </phDependence>
    <temperatureDependence>
        <text evidence="1">Optimum temperature is between 45-55 degrees Celsius with hemoglobin as substrate. Loses 50% of its activity at 65 degrees Celsius.</text>
    </temperatureDependence>
</comment>
<comment type="biotechnology">
    <text evidence="1">This enzyme is capable of clotting milk and thus can be used for cheese production.</text>
</comment>
<comment type="similarity">
    <text evidence="3">Belongs to the peptidase A1 family.</text>
</comment>
<feature type="chain" id="PRO_0000451150" description="Mucorpepsin">
    <location>
        <begin position="1" status="less than"/>
        <end position="10" status="greater than"/>
    </location>
</feature>
<feature type="non-terminal residue" evidence="2">
    <location>
        <position position="1"/>
    </location>
</feature>
<feature type="non-terminal residue" evidence="2">
    <location>
        <position position="10"/>
    </location>
</feature>
<sequence length="10" mass="947">AEGDGSVDTP</sequence>
<name>CARP_MUCTH</name>
<reference evidence="3" key="1">
    <citation type="journal article" date="2019" name="Prep. Biochem. Biotechnol.">
        <title>Production of highly active fungal milk-clotting enzyme by solid-state fermentation.</title>
        <authorList>
            <person name="Chinmayee C.V."/>
            <person name="Vidya C."/>
            <person name="Rani A."/>
            <person name="Singh S.A."/>
        </authorList>
    </citation>
    <scope>PROTEIN SEQUENCE</scope>
    <scope>CATALYTIC ACTIVITY</scope>
    <scope>BIOPHYSICOCHEMICAL PROPERTIES</scope>
    <scope>BIOTECHNOLOGY</scope>
</reference>